<dbReference type="EMBL" id="CU928162">
    <property type="protein sequence ID" value="CAR07559.1"/>
    <property type="molecule type" value="Genomic_DNA"/>
</dbReference>
<dbReference type="RefSeq" id="WP_000804725.1">
    <property type="nucleotide sequence ID" value="NC_011745.1"/>
</dbReference>
<dbReference type="SMR" id="B7MTZ5"/>
<dbReference type="KEGG" id="ecq:ECED1_1359"/>
<dbReference type="HOGENOM" id="CLU_036856_0_1_6"/>
<dbReference type="Proteomes" id="UP000000748">
    <property type="component" value="Chromosome"/>
</dbReference>
<dbReference type="GO" id="GO:0005737">
    <property type="term" value="C:cytoplasm"/>
    <property type="evidence" value="ECO:0007669"/>
    <property type="project" value="UniProtKB-SubCell"/>
</dbReference>
<dbReference type="GO" id="GO:0016149">
    <property type="term" value="F:translation release factor activity, codon specific"/>
    <property type="evidence" value="ECO:0007669"/>
    <property type="project" value="UniProtKB-UniRule"/>
</dbReference>
<dbReference type="FunFam" id="3.30.160.20:FF:000004">
    <property type="entry name" value="Peptide chain release factor 1"/>
    <property type="match status" value="1"/>
</dbReference>
<dbReference type="FunFam" id="3.30.70.1660:FF:000002">
    <property type="entry name" value="Peptide chain release factor 1"/>
    <property type="match status" value="1"/>
</dbReference>
<dbReference type="FunFam" id="3.30.70.1660:FF:000004">
    <property type="entry name" value="Peptide chain release factor 1"/>
    <property type="match status" value="1"/>
</dbReference>
<dbReference type="Gene3D" id="3.30.160.20">
    <property type="match status" value="1"/>
</dbReference>
<dbReference type="Gene3D" id="3.30.70.1660">
    <property type="match status" value="1"/>
</dbReference>
<dbReference type="Gene3D" id="6.10.140.1950">
    <property type="match status" value="1"/>
</dbReference>
<dbReference type="HAMAP" id="MF_00093">
    <property type="entry name" value="Rel_fac_1"/>
    <property type="match status" value="1"/>
</dbReference>
<dbReference type="InterPro" id="IPR005139">
    <property type="entry name" value="PCRF"/>
</dbReference>
<dbReference type="InterPro" id="IPR000352">
    <property type="entry name" value="Pep_chain_release_fac_I"/>
</dbReference>
<dbReference type="InterPro" id="IPR045853">
    <property type="entry name" value="Pep_chain_release_fac_I_sf"/>
</dbReference>
<dbReference type="InterPro" id="IPR050057">
    <property type="entry name" value="Prokaryotic/Mito_RF"/>
</dbReference>
<dbReference type="InterPro" id="IPR004373">
    <property type="entry name" value="RF-1"/>
</dbReference>
<dbReference type="NCBIfam" id="TIGR00019">
    <property type="entry name" value="prfA"/>
    <property type="match status" value="1"/>
</dbReference>
<dbReference type="NCBIfam" id="NF001859">
    <property type="entry name" value="PRK00591.1"/>
    <property type="match status" value="1"/>
</dbReference>
<dbReference type="PANTHER" id="PTHR43804">
    <property type="entry name" value="LD18447P"/>
    <property type="match status" value="1"/>
</dbReference>
<dbReference type="PANTHER" id="PTHR43804:SF7">
    <property type="entry name" value="LD18447P"/>
    <property type="match status" value="1"/>
</dbReference>
<dbReference type="Pfam" id="PF03462">
    <property type="entry name" value="PCRF"/>
    <property type="match status" value="1"/>
</dbReference>
<dbReference type="Pfam" id="PF00472">
    <property type="entry name" value="RF-1"/>
    <property type="match status" value="1"/>
</dbReference>
<dbReference type="SMART" id="SM00937">
    <property type="entry name" value="PCRF"/>
    <property type="match status" value="1"/>
</dbReference>
<dbReference type="SUPFAM" id="SSF75620">
    <property type="entry name" value="Release factor"/>
    <property type="match status" value="1"/>
</dbReference>
<dbReference type="PROSITE" id="PS00745">
    <property type="entry name" value="RF_PROK_I"/>
    <property type="match status" value="1"/>
</dbReference>
<keyword id="KW-0963">Cytoplasm</keyword>
<keyword id="KW-0488">Methylation</keyword>
<keyword id="KW-0648">Protein biosynthesis</keyword>
<proteinExistence type="inferred from homology"/>
<name>RF1_ECO81</name>
<comment type="function">
    <text evidence="1">Peptide chain release factor 1 directs the termination of translation in response to the peptide chain termination codons UAG and UAA.</text>
</comment>
<comment type="subcellular location">
    <subcellularLocation>
        <location evidence="1">Cytoplasm</location>
    </subcellularLocation>
</comment>
<comment type="PTM">
    <text evidence="1">Methylated by PrmC. Methylation increases the termination efficiency of RF1.</text>
</comment>
<comment type="similarity">
    <text evidence="1">Belongs to the prokaryotic/mitochondrial release factor family.</text>
</comment>
<evidence type="ECO:0000255" key="1">
    <source>
        <dbReference type="HAMAP-Rule" id="MF_00093"/>
    </source>
</evidence>
<evidence type="ECO:0000256" key="2">
    <source>
        <dbReference type="SAM" id="MobiDB-lite"/>
    </source>
</evidence>
<sequence>MKPSIVAKLEALHERHEEVQALLGDAQTIADQERFRALSREYAQLSDVSRCFTDWQQVQEDIETAQMMLDDPEMREMAQDELREAKEKSEQLEQQLQVLLLPKDPDDERNAFLEVRAGTGGDEAALFAGDLFRMYSRYAEARRWRVEIMSASEGEHGGYKEIIAKISGDGVYGRLKFESGGHRVQRVPATESQGRIHTSACTVAVMPELPDAELPDINPADLRIDTFRSSGAGGQHVNTTDSAIRITHLPTGIVVECQDERSQHKNKAKALSVLGARIHAAEMAKRQQAEASTRRNLLGSGDRSDRNRTYNFPQGRVTDHRINLTLYCLDEVMEGKLDMLIEPIIQEHQADQLAALSEQE</sequence>
<protein>
    <recommendedName>
        <fullName evidence="1">Peptide chain release factor 1</fullName>
        <shortName evidence="1">RF-1</shortName>
    </recommendedName>
</protein>
<feature type="chain" id="PRO_1000193490" description="Peptide chain release factor 1">
    <location>
        <begin position="1"/>
        <end position="360"/>
    </location>
</feature>
<feature type="region of interest" description="Disordered" evidence="2">
    <location>
        <begin position="284"/>
        <end position="312"/>
    </location>
</feature>
<feature type="modified residue" description="N5-methylglutamine" evidence="1">
    <location>
        <position position="235"/>
    </location>
</feature>
<gene>
    <name evidence="1" type="primary">prfA</name>
    <name type="ordered locus">ECED1_1359</name>
</gene>
<organism>
    <name type="scientific">Escherichia coli O81 (strain ED1a)</name>
    <dbReference type="NCBI Taxonomy" id="585397"/>
    <lineage>
        <taxon>Bacteria</taxon>
        <taxon>Pseudomonadati</taxon>
        <taxon>Pseudomonadota</taxon>
        <taxon>Gammaproteobacteria</taxon>
        <taxon>Enterobacterales</taxon>
        <taxon>Enterobacteriaceae</taxon>
        <taxon>Escherichia</taxon>
    </lineage>
</organism>
<reference key="1">
    <citation type="journal article" date="2009" name="PLoS Genet.">
        <title>Organised genome dynamics in the Escherichia coli species results in highly diverse adaptive paths.</title>
        <authorList>
            <person name="Touchon M."/>
            <person name="Hoede C."/>
            <person name="Tenaillon O."/>
            <person name="Barbe V."/>
            <person name="Baeriswyl S."/>
            <person name="Bidet P."/>
            <person name="Bingen E."/>
            <person name="Bonacorsi S."/>
            <person name="Bouchier C."/>
            <person name="Bouvet O."/>
            <person name="Calteau A."/>
            <person name="Chiapello H."/>
            <person name="Clermont O."/>
            <person name="Cruveiller S."/>
            <person name="Danchin A."/>
            <person name="Diard M."/>
            <person name="Dossat C."/>
            <person name="Karoui M.E."/>
            <person name="Frapy E."/>
            <person name="Garry L."/>
            <person name="Ghigo J.M."/>
            <person name="Gilles A.M."/>
            <person name="Johnson J."/>
            <person name="Le Bouguenec C."/>
            <person name="Lescat M."/>
            <person name="Mangenot S."/>
            <person name="Martinez-Jehanne V."/>
            <person name="Matic I."/>
            <person name="Nassif X."/>
            <person name="Oztas S."/>
            <person name="Petit M.A."/>
            <person name="Pichon C."/>
            <person name="Rouy Z."/>
            <person name="Ruf C.S."/>
            <person name="Schneider D."/>
            <person name="Tourret J."/>
            <person name="Vacherie B."/>
            <person name="Vallenet D."/>
            <person name="Medigue C."/>
            <person name="Rocha E.P.C."/>
            <person name="Denamur E."/>
        </authorList>
    </citation>
    <scope>NUCLEOTIDE SEQUENCE [LARGE SCALE GENOMIC DNA]</scope>
    <source>
        <strain>ED1a</strain>
    </source>
</reference>
<accession>B7MTZ5</accession>